<sequence length="17" mass="1731">KIANGSGSEQDIAEAKI</sequence>
<gene>
    <name type="primary">atp16</name>
</gene>
<accession>P85445</accession>
<protein>
    <recommendedName>
        <fullName>ATP synthase subunit delta, mitochondrial</fullName>
    </recommendedName>
    <alternativeName>
        <fullName>F-ATPase delta subunit</fullName>
    </alternativeName>
</protein>
<proteinExistence type="evidence at protein level"/>
<organism>
    <name type="scientific">Penicillium glabrum</name>
    <name type="common">Penicillium frequentans</name>
    <dbReference type="NCBI Taxonomy" id="69773"/>
    <lineage>
        <taxon>Eukaryota</taxon>
        <taxon>Fungi</taxon>
        <taxon>Dikarya</taxon>
        <taxon>Ascomycota</taxon>
        <taxon>Pezizomycotina</taxon>
        <taxon>Eurotiomycetes</taxon>
        <taxon>Eurotiomycetidae</taxon>
        <taxon>Eurotiales</taxon>
        <taxon>Aspergillaceae</taxon>
        <taxon>Penicillium</taxon>
    </lineage>
</organism>
<keyword id="KW-0020">Allergen</keyword>
<keyword id="KW-0066">ATP synthesis</keyword>
<keyword id="KW-0139">CF(1)</keyword>
<keyword id="KW-0903">Direct protein sequencing</keyword>
<keyword id="KW-0375">Hydrogen ion transport</keyword>
<keyword id="KW-0406">Ion transport</keyword>
<keyword id="KW-0472">Membrane</keyword>
<keyword id="KW-0496">Mitochondrion</keyword>
<keyword id="KW-0999">Mitochondrion inner membrane</keyword>
<keyword id="KW-0813">Transport</keyword>
<evidence type="ECO:0000255" key="1"/>
<evidence type="ECO:0000269" key="2">
    <source ref="1"/>
</evidence>
<evidence type="ECO:0000305" key="3"/>
<feature type="chain" id="PRO_0000324675" description="ATP synthase subunit delta, mitochondrial">
    <location>
        <begin position="1" status="less than"/>
        <end position="17" status="greater than"/>
    </location>
</feature>
<feature type="non-terminal residue">
    <location>
        <position position="1"/>
    </location>
</feature>
<feature type="non-terminal residue">
    <location>
        <position position="17"/>
    </location>
</feature>
<reference evidence="3" key="1">
    <citation type="submission" date="2008-02" db="UniProtKB">
        <title>Identification of putative allergens from Penicillium glabrum using two-dimensional (2-D) gel electrophoresis immunoblotting approach.</title>
        <authorList>
            <person name="Raquel H."/>
            <person name="Jeno P."/>
            <person name="Moita C."/>
            <person name="Cardoso C."/>
            <person name="Sao Jose H."/>
            <person name="San-Romao V."/>
            <person name="Pinto Ricardo C."/>
            <person name="Oliveira M.M."/>
        </authorList>
    </citation>
    <scope>PROTEIN SEQUENCE</scope>
    <scope>ALLERGEN</scope>
    <source>
        <strain>B7</strain>
    </source>
</reference>
<dbReference type="GO" id="GO:0005743">
    <property type="term" value="C:mitochondrial inner membrane"/>
    <property type="evidence" value="ECO:0007669"/>
    <property type="project" value="UniProtKB-SubCell"/>
</dbReference>
<dbReference type="GO" id="GO:0045259">
    <property type="term" value="C:proton-transporting ATP synthase complex"/>
    <property type="evidence" value="ECO:0007669"/>
    <property type="project" value="UniProtKB-KW"/>
</dbReference>
<dbReference type="GO" id="GO:0006754">
    <property type="term" value="P:ATP biosynthetic process"/>
    <property type="evidence" value="ECO:0007669"/>
    <property type="project" value="UniProtKB-KW"/>
</dbReference>
<dbReference type="GO" id="GO:1902600">
    <property type="term" value="P:proton transmembrane transport"/>
    <property type="evidence" value="ECO:0007669"/>
    <property type="project" value="UniProtKB-KW"/>
</dbReference>
<name>ATPD_PENGL</name>
<comment type="function">
    <text>Mitochondrial membrane ATP synthase (F(1)F(0) ATP synthase or Complex V) produces ATP from ADP in the presence of a proton gradient across the membrane which is generated by electron transport complexes of the respiratory chain. F-type ATPases consist of two structural domains, F(1) - containing the extramembraneous catalytic core, and F(0) - containing the membrane proton channel, linked together by a central stalk and a peripheral stalk. During catalysis, ATP turnover in the catalytic domain of F(1) is coupled via a rotary mechanism of the central stalk subunits to proton translocation. Part of the complex F(1) domain and of the central stalk which is part of the complex rotary element. Rotation of the central stalk against the surrounding alpha(3)beta(3) subunits leads to hydrolysis of ATP in three separate catalytic sites on the beta subunits.</text>
</comment>
<comment type="subunit">
    <text evidence="3">F-type ATPases have 2 components, CF(1) - the catalytic core - and CF(0) - the membrane proton channel. CF(1) has five subunits: alpha(3), beta(3), gamma(1), delta(1), epsilon(1). CF(0) has three main subunits: a, b and c.</text>
</comment>
<comment type="subcellular location">
    <subcellularLocation>
        <location evidence="3">Mitochondrion</location>
    </subcellularLocation>
    <subcellularLocation>
        <location evidence="3">Mitochondrion inner membrane</location>
    </subcellularLocation>
</comment>
<comment type="allergen">
    <text evidence="2">Causes an allergic reaction in human. Binds to IgE.</text>
</comment>
<comment type="similarity">
    <text evidence="1">Belongs to the ATPase epsilon chain family.</text>
</comment>